<organism>
    <name type="scientific">Bos taurus</name>
    <name type="common">Bovine</name>
    <dbReference type="NCBI Taxonomy" id="9913"/>
    <lineage>
        <taxon>Eukaryota</taxon>
        <taxon>Metazoa</taxon>
        <taxon>Chordata</taxon>
        <taxon>Craniata</taxon>
        <taxon>Vertebrata</taxon>
        <taxon>Euteleostomi</taxon>
        <taxon>Mammalia</taxon>
        <taxon>Eutheria</taxon>
        <taxon>Laurasiatheria</taxon>
        <taxon>Artiodactyla</taxon>
        <taxon>Ruminantia</taxon>
        <taxon>Pecora</taxon>
        <taxon>Bovidae</taxon>
        <taxon>Bovinae</taxon>
        <taxon>Bos</taxon>
    </lineage>
</organism>
<feature type="signal peptide" evidence="1">
    <location>
        <begin position="1"/>
        <end position="18"/>
    </location>
</feature>
<feature type="chain" id="PRO_0000004224" description="Carbonic anhydrase 4">
    <location>
        <begin position="19"/>
        <end position="284"/>
    </location>
</feature>
<feature type="propeptide" id="PRO_0000004225" description="Removed in mature form" evidence="3">
    <location>
        <begin position="285"/>
        <end position="312"/>
    </location>
</feature>
<feature type="domain" description="Alpha-carbonic anhydrase" evidence="6">
    <location>
        <begin position="21"/>
        <end position="285"/>
    </location>
</feature>
<feature type="active site" description="Proton donor/acceptor" evidence="2">
    <location>
        <position position="88"/>
    </location>
</feature>
<feature type="binding site" evidence="4">
    <location>
        <position position="115"/>
    </location>
    <ligand>
        <name>Zn(2+)</name>
        <dbReference type="ChEBI" id="CHEBI:29105"/>
        <note>catalytic</note>
    </ligand>
</feature>
<feature type="binding site" evidence="4">
    <location>
        <position position="117"/>
    </location>
    <ligand>
        <name>Zn(2+)</name>
        <dbReference type="ChEBI" id="CHEBI:29105"/>
        <note>catalytic</note>
    </ligand>
</feature>
<feature type="binding site" evidence="4">
    <location>
        <position position="140"/>
    </location>
    <ligand>
        <name>Zn(2+)</name>
        <dbReference type="ChEBI" id="CHEBI:29105"/>
        <note>catalytic</note>
    </ligand>
</feature>
<feature type="binding site" evidence="2">
    <location>
        <begin position="225"/>
        <end position="226"/>
    </location>
    <ligand>
        <name>substrate</name>
    </ligand>
</feature>
<feature type="lipid moiety-binding region" description="GPI-anchor amidated serine" evidence="3">
    <location>
        <position position="284"/>
    </location>
</feature>
<feature type="glycosylation site" description="N-linked (GlcNAc...) asparagine" evidence="5">
    <location>
        <position position="33"/>
    </location>
</feature>
<feature type="glycosylation site" description="N-linked (GlcNAc...) asparagine" evidence="5">
    <location>
        <position position="152"/>
    </location>
</feature>
<feature type="glycosylation site" description="N-linked (GlcNAc...) asparagine" evidence="5">
    <location>
        <position position="195"/>
    </location>
</feature>
<feature type="glycosylation site" description="N-linked (GlcNAc...) asparagine" evidence="5">
    <location>
        <position position="265"/>
    </location>
</feature>
<feature type="disulfide bond" evidence="4">
    <location>
        <begin position="24"/>
        <end position="36"/>
    </location>
</feature>
<feature type="disulfide bond" evidence="4">
    <location>
        <begin position="46"/>
        <end position="229"/>
    </location>
</feature>
<keyword id="KW-1003">Cell membrane</keyword>
<keyword id="KW-1015">Disulfide bond</keyword>
<keyword id="KW-0325">Glycoprotein</keyword>
<keyword id="KW-0336">GPI-anchor</keyword>
<keyword id="KW-0449">Lipoprotein</keyword>
<keyword id="KW-0456">Lyase</keyword>
<keyword id="KW-0472">Membrane</keyword>
<keyword id="KW-0479">Metal-binding</keyword>
<keyword id="KW-1185">Reference proteome</keyword>
<keyword id="KW-0732">Signal</keyword>
<keyword id="KW-0862">Zinc</keyword>
<sequence length="312" mass="35151">MRLLLALLVLAAAPPQARAASHWCYQIQVKPSNYTCLEPDEWEGSCQNNRQSPVNIVTAKTQLDPNLGRFSFSGYNMKHQWVVQNNGHTVMVLLENKPSIAGGGLSTRYQATQLHLHWSRAMDRGSEHSFDGERFAMEMHIVHEKEKGLSGNASQNQFAEDEIAVLAFMVEDGSKNVNFQPLVEALSDIPRPNMNTTMKEGVSLFDLLPEEESLRHYFRYLGSLTTPTCDEKVVWTVFQKPIQLHRDQILAFSQKLFYDDQQKVNMTDNVRPVQSLGQRQVFRSGAPGLLLAQPLPTLLAPVLACLTVGFLR</sequence>
<evidence type="ECO:0000250" key="1"/>
<evidence type="ECO:0000250" key="2">
    <source>
        <dbReference type="UniProtKB" id="P00918"/>
    </source>
</evidence>
<evidence type="ECO:0000250" key="3">
    <source>
        <dbReference type="UniProtKB" id="P22748"/>
    </source>
</evidence>
<evidence type="ECO:0000250" key="4">
    <source>
        <dbReference type="UniProtKB" id="Q64444"/>
    </source>
</evidence>
<evidence type="ECO:0000255" key="5"/>
<evidence type="ECO:0000255" key="6">
    <source>
        <dbReference type="PROSITE-ProRule" id="PRU01134"/>
    </source>
</evidence>
<evidence type="ECO:0000305" key="7"/>
<dbReference type="EC" id="4.2.1.1" evidence="3"/>
<dbReference type="EMBL" id="U58870">
    <property type="protein sequence ID" value="AAB09466.1"/>
    <property type="molecule type" value="mRNA"/>
</dbReference>
<dbReference type="EMBL" id="BC142534">
    <property type="protein sequence ID" value="AAI42535.1"/>
    <property type="molecule type" value="mRNA"/>
</dbReference>
<dbReference type="RefSeq" id="NP_776322.1">
    <property type="nucleotide sequence ID" value="NM_173897.1"/>
</dbReference>
<dbReference type="SMR" id="Q95323"/>
<dbReference type="FunCoup" id="Q95323">
    <property type="interactions" value="51"/>
</dbReference>
<dbReference type="STRING" id="9913.ENSBTAP00000063467"/>
<dbReference type="BindingDB" id="Q95323"/>
<dbReference type="ChEMBL" id="CHEMBL281"/>
<dbReference type="DrugCentral" id="Q95323"/>
<dbReference type="GlyCosmos" id="Q95323">
    <property type="glycosylation" value="4 sites, No reported glycans"/>
</dbReference>
<dbReference type="GlyGen" id="Q95323">
    <property type="glycosylation" value="4 sites"/>
</dbReference>
<dbReference type="PaxDb" id="9913-ENSBTAP00000023909"/>
<dbReference type="GeneID" id="280741"/>
<dbReference type="KEGG" id="bta:280741"/>
<dbReference type="CTD" id="762"/>
<dbReference type="VEuPathDB" id="HostDB:ENSBTAG00000017969"/>
<dbReference type="eggNOG" id="KOG0382">
    <property type="taxonomic scope" value="Eukaryota"/>
</dbReference>
<dbReference type="HOGENOM" id="CLU_039326_2_2_1"/>
<dbReference type="InParanoid" id="Q95323"/>
<dbReference type="OMA" id="AVEFHLH"/>
<dbReference type="OrthoDB" id="429145at2759"/>
<dbReference type="TreeFam" id="TF316425"/>
<dbReference type="Reactome" id="R-BTA-1237044">
    <property type="pathway name" value="Erythrocytes take up carbon dioxide and release oxygen"/>
</dbReference>
<dbReference type="Reactome" id="R-BTA-1247673">
    <property type="pathway name" value="Erythrocytes take up oxygen and release carbon dioxide"/>
</dbReference>
<dbReference type="Reactome" id="R-BTA-1475029">
    <property type="pathway name" value="Reversible hydration of carbon dioxide"/>
</dbReference>
<dbReference type="PRO" id="PR:Q95323"/>
<dbReference type="Proteomes" id="UP000009136">
    <property type="component" value="Chromosome 19"/>
</dbReference>
<dbReference type="Bgee" id="ENSBTAG00000017969">
    <property type="expression patterns" value="Expressed in cortex of kidney and 93 other cell types or tissues"/>
</dbReference>
<dbReference type="GO" id="GO:0005886">
    <property type="term" value="C:plasma membrane"/>
    <property type="evidence" value="ECO:0000318"/>
    <property type="project" value="GO_Central"/>
</dbReference>
<dbReference type="GO" id="GO:0098552">
    <property type="term" value="C:side of membrane"/>
    <property type="evidence" value="ECO:0007669"/>
    <property type="project" value="UniProtKB-KW"/>
</dbReference>
<dbReference type="GO" id="GO:0004089">
    <property type="term" value="F:carbonate dehydratase activity"/>
    <property type="evidence" value="ECO:0000318"/>
    <property type="project" value="GO_Central"/>
</dbReference>
<dbReference type="GO" id="GO:0008270">
    <property type="term" value="F:zinc ion binding"/>
    <property type="evidence" value="ECO:0007669"/>
    <property type="project" value="InterPro"/>
</dbReference>
<dbReference type="CDD" id="cd03117">
    <property type="entry name" value="alpha_CA_IV_XV_like"/>
    <property type="match status" value="1"/>
</dbReference>
<dbReference type="FunFam" id="3.10.200.10:FF:000003">
    <property type="entry name" value="Carbonic anhydrase 12"/>
    <property type="match status" value="1"/>
</dbReference>
<dbReference type="Gene3D" id="3.10.200.10">
    <property type="entry name" value="Alpha carbonic anhydrase"/>
    <property type="match status" value="1"/>
</dbReference>
<dbReference type="InterPro" id="IPR041874">
    <property type="entry name" value="CA4/CA15"/>
</dbReference>
<dbReference type="InterPro" id="IPR001148">
    <property type="entry name" value="CA_dom"/>
</dbReference>
<dbReference type="InterPro" id="IPR036398">
    <property type="entry name" value="CA_dom_sf"/>
</dbReference>
<dbReference type="InterPro" id="IPR023561">
    <property type="entry name" value="Carbonic_anhydrase_a-class"/>
</dbReference>
<dbReference type="PANTHER" id="PTHR18952">
    <property type="entry name" value="CARBONIC ANHYDRASE"/>
    <property type="match status" value="1"/>
</dbReference>
<dbReference type="PANTHER" id="PTHR18952:SF95">
    <property type="entry name" value="CARBONIC ANHYDRASE 4"/>
    <property type="match status" value="1"/>
</dbReference>
<dbReference type="Pfam" id="PF00194">
    <property type="entry name" value="Carb_anhydrase"/>
    <property type="match status" value="1"/>
</dbReference>
<dbReference type="SMART" id="SM01057">
    <property type="entry name" value="Carb_anhydrase"/>
    <property type="match status" value="1"/>
</dbReference>
<dbReference type="SUPFAM" id="SSF51069">
    <property type="entry name" value="Carbonic anhydrase"/>
    <property type="match status" value="1"/>
</dbReference>
<dbReference type="PROSITE" id="PS51144">
    <property type="entry name" value="ALPHA_CA_2"/>
    <property type="match status" value="1"/>
</dbReference>
<comment type="function">
    <text evidence="3">Catalyzes the reversible hydration of carbon dioxide into bicarbonate and protons and thus is essential to maintaining intracellular and extracellular pH. May stimulate the sodium/bicarbonate transporter activity of SLC4A4 that acts in pH homeostasis. It is essential for acid overload removal from the retina and retina epithelium, and acid release in the choriocapillaris in the choroid.</text>
</comment>
<comment type="catalytic activity">
    <reaction evidence="3">
        <text>hydrogencarbonate + H(+) = CO2 + H2O</text>
        <dbReference type="Rhea" id="RHEA:10748"/>
        <dbReference type="ChEBI" id="CHEBI:15377"/>
        <dbReference type="ChEBI" id="CHEBI:15378"/>
        <dbReference type="ChEBI" id="CHEBI:16526"/>
        <dbReference type="ChEBI" id="CHEBI:17544"/>
        <dbReference type="EC" id="4.2.1.1"/>
    </reaction>
    <physiologicalReaction direction="left-to-right" evidence="3">
        <dbReference type="Rhea" id="RHEA:10749"/>
    </physiologicalReaction>
    <physiologicalReaction direction="right-to-left" evidence="3">
        <dbReference type="Rhea" id="RHEA:10750"/>
    </physiologicalReaction>
</comment>
<comment type="cofactor">
    <cofactor evidence="3">
        <name>Zn(2+)</name>
        <dbReference type="ChEBI" id="CHEBI:29105"/>
    </cofactor>
</comment>
<comment type="activity regulation">
    <text evidence="1">Inhibited by acetazolamide.</text>
</comment>
<comment type="subunit">
    <text evidence="3">Interacts with SLC4A4.</text>
</comment>
<comment type="subcellular location">
    <subcellularLocation>
        <location evidence="3">Cell membrane</location>
        <topology evidence="3">Lipid-anchor</topology>
        <topology evidence="3">GPI-anchor</topology>
    </subcellularLocation>
</comment>
<comment type="similarity">
    <text evidence="7">Belongs to the alpha-carbonic anhydrase family.</text>
</comment>
<protein>
    <recommendedName>
        <fullName>Carbonic anhydrase 4</fullName>
        <ecNumber evidence="3">4.2.1.1</ecNumber>
    </recommendedName>
    <alternativeName>
        <fullName>Carbonate dehydratase IV</fullName>
    </alternativeName>
    <alternativeName>
        <fullName>Carbonic anhydrase IV</fullName>
        <shortName>CA-IV</shortName>
    </alternativeName>
</protein>
<proteinExistence type="evidence at transcript level"/>
<accession>Q95323</accession>
<accession>A5PKL8</accession>
<reference key="1">
    <citation type="submission" date="1996-05" db="EMBL/GenBank/DDBJ databases">
        <title>Bos taurus carbonic anhydrase IV (bovine carbonic anhydrase IV) mRNA, complete cds.</title>
        <authorList>
            <person name="Tamai S."/>
        </authorList>
    </citation>
    <scope>NUCLEOTIDE SEQUENCE [MRNA]</scope>
    <source>
        <strain>Holstein</strain>
        <tissue>Kidney</tissue>
    </source>
</reference>
<reference key="2">
    <citation type="submission" date="2007-06" db="EMBL/GenBank/DDBJ databases">
        <authorList>
            <consortium name="NIH - Mammalian Gene Collection (MGC) project"/>
        </authorList>
    </citation>
    <scope>NUCLEOTIDE SEQUENCE [LARGE SCALE MRNA]</scope>
    <source>
        <strain>Crossbred X Angus</strain>
        <tissue>Ileum</tissue>
    </source>
</reference>
<gene>
    <name type="primary">CA4</name>
</gene>
<name>CAH4_BOVIN</name>